<feature type="chain" id="PRO_1000098344" description="Probable cytosol aminopeptidase">
    <location>
        <begin position="1"/>
        <end position="503"/>
    </location>
</feature>
<feature type="active site" evidence="1">
    <location>
        <position position="282"/>
    </location>
</feature>
<feature type="active site" evidence="1">
    <location>
        <position position="356"/>
    </location>
</feature>
<feature type="binding site" evidence="1">
    <location>
        <position position="270"/>
    </location>
    <ligand>
        <name>Mn(2+)</name>
        <dbReference type="ChEBI" id="CHEBI:29035"/>
        <label>2</label>
    </ligand>
</feature>
<feature type="binding site" evidence="1">
    <location>
        <position position="275"/>
    </location>
    <ligand>
        <name>Mn(2+)</name>
        <dbReference type="ChEBI" id="CHEBI:29035"/>
        <label>1</label>
    </ligand>
</feature>
<feature type="binding site" evidence="1">
    <location>
        <position position="275"/>
    </location>
    <ligand>
        <name>Mn(2+)</name>
        <dbReference type="ChEBI" id="CHEBI:29035"/>
        <label>2</label>
    </ligand>
</feature>
<feature type="binding site" evidence="1">
    <location>
        <position position="293"/>
    </location>
    <ligand>
        <name>Mn(2+)</name>
        <dbReference type="ChEBI" id="CHEBI:29035"/>
        <label>2</label>
    </ligand>
</feature>
<feature type="binding site" evidence="1">
    <location>
        <position position="352"/>
    </location>
    <ligand>
        <name>Mn(2+)</name>
        <dbReference type="ChEBI" id="CHEBI:29035"/>
        <label>1</label>
    </ligand>
</feature>
<feature type="binding site" evidence="1">
    <location>
        <position position="354"/>
    </location>
    <ligand>
        <name>Mn(2+)</name>
        <dbReference type="ChEBI" id="CHEBI:29035"/>
        <label>1</label>
    </ligand>
</feature>
<feature type="binding site" evidence="1">
    <location>
        <position position="354"/>
    </location>
    <ligand>
        <name>Mn(2+)</name>
        <dbReference type="ChEBI" id="CHEBI:29035"/>
        <label>2</label>
    </ligand>
</feature>
<name>AMPA_SALDC</name>
<organism>
    <name type="scientific">Salmonella dublin (strain CT_02021853)</name>
    <dbReference type="NCBI Taxonomy" id="439851"/>
    <lineage>
        <taxon>Bacteria</taxon>
        <taxon>Pseudomonadati</taxon>
        <taxon>Pseudomonadota</taxon>
        <taxon>Gammaproteobacteria</taxon>
        <taxon>Enterobacterales</taxon>
        <taxon>Enterobacteriaceae</taxon>
        <taxon>Salmonella</taxon>
    </lineage>
</organism>
<reference key="1">
    <citation type="journal article" date="2011" name="J. Bacteriol.">
        <title>Comparative genomics of 28 Salmonella enterica isolates: evidence for CRISPR-mediated adaptive sublineage evolution.</title>
        <authorList>
            <person name="Fricke W.F."/>
            <person name="Mammel M.K."/>
            <person name="McDermott P.F."/>
            <person name="Tartera C."/>
            <person name="White D.G."/>
            <person name="Leclerc J.E."/>
            <person name="Ravel J."/>
            <person name="Cebula T.A."/>
        </authorList>
    </citation>
    <scope>NUCLEOTIDE SEQUENCE [LARGE SCALE GENOMIC DNA]</scope>
    <source>
        <strain>CT_02021853</strain>
    </source>
</reference>
<sequence>MEFSVKSGSPEKQRSACIVVGVFEPRRLSPIAEQLDKISDGYISALLRRGELEGKPGQTLLLHHVPNVLSERILLIGCGKERELDERQYKQVIQKTINTLNDTGSMEAVCFLTELHVKGRNNYWKVRQAVETAKETLYSFDQLKTNKSEPRRPLRKMVFNVPTRRELTSGERAIQHGLAIAAGIKAAKDLGNMPPNICNAAYLASQARQLADSYSKNVITRVIGEQQMRELGMNAYLAVGHGSQNESLMSVIEYKGNPSEDARPIVLVGKGLTFDSGGISIKPSEGMDEMKYDMCGAAAVYGVMRMVAELQLPINVIGVLAGCENMPGGRAYRPGDVLTTMSGQTVEVLNTDAEGRLVLCDVLTYVERFEPEAVIDVATLTGACVIALGHHITGLMSNHNPLAHELIGASEQAGDRAWRLPLGDEFQEQLESNFADMANIGGRPGGAITAGCFLSRFTRKYNWAHLDIAGTAWRSGKAKGATGRPVALLSQFLLNRAGFNGEE</sequence>
<proteinExistence type="inferred from homology"/>
<accession>B5FSH0</accession>
<keyword id="KW-0031">Aminopeptidase</keyword>
<keyword id="KW-0963">Cytoplasm</keyword>
<keyword id="KW-0378">Hydrolase</keyword>
<keyword id="KW-0464">Manganese</keyword>
<keyword id="KW-0479">Metal-binding</keyword>
<keyword id="KW-0645">Protease</keyword>
<comment type="function">
    <text evidence="1">Presumably involved in the processing and regular turnover of intracellular proteins. Catalyzes the removal of unsubstituted N-terminal amino acids from various peptides.</text>
</comment>
<comment type="catalytic activity">
    <reaction evidence="1">
        <text>Release of an N-terminal amino acid, Xaa-|-Yaa-, in which Xaa is preferably Leu, but may be other amino acids including Pro although not Arg or Lys, and Yaa may be Pro. Amino acid amides and methyl esters are also readily hydrolyzed, but rates on arylamides are exceedingly low.</text>
        <dbReference type="EC" id="3.4.11.1"/>
    </reaction>
</comment>
<comment type="catalytic activity">
    <reaction evidence="1">
        <text>Release of an N-terminal amino acid, preferentially leucine, but not glutamic or aspartic acids.</text>
        <dbReference type="EC" id="3.4.11.10"/>
    </reaction>
</comment>
<comment type="cofactor">
    <cofactor evidence="1">
        <name>Mn(2+)</name>
        <dbReference type="ChEBI" id="CHEBI:29035"/>
    </cofactor>
    <text evidence="1">Binds 2 manganese ions per subunit.</text>
</comment>
<comment type="subcellular location">
    <subcellularLocation>
        <location evidence="1">Cytoplasm</location>
    </subcellularLocation>
</comment>
<comment type="similarity">
    <text evidence="1">Belongs to the peptidase M17 family.</text>
</comment>
<dbReference type="EC" id="3.4.11.1" evidence="1"/>
<dbReference type="EC" id="3.4.11.10" evidence="1"/>
<dbReference type="EMBL" id="CP001144">
    <property type="protein sequence ID" value="ACH77170.1"/>
    <property type="molecule type" value="Genomic_DNA"/>
</dbReference>
<dbReference type="RefSeq" id="WP_000397158.1">
    <property type="nucleotide sequence ID" value="NC_011205.1"/>
</dbReference>
<dbReference type="SMR" id="B5FSH0"/>
<dbReference type="MEROPS" id="M17.003"/>
<dbReference type="KEGG" id="sed:SeD_A4863"/>
<dbReference type="HOGENOM" id="CLU_013734_2_2_6"/>
<dbReference type="Proteomes" id="UP000008322">
    <property type="component" value="Chromosome"/>
</dbReference>
<dbReference type="GO" id="GO:0005737">
    <property type="term" value="C:cytoplasm"/>
    <property type="evidence" value="ECO:0007669"/>
    <property type="project" value="UniProtKB-SubCell"/>
</dbReference>
<dbReference type="GO" id="GO:0030145">
    <property type="term" value="F:manganese ion binding"/>
    <property type="evidence" value="ECO:0007669"/>
    <property type="project" value="UniProtKB-UniRule"/>
</dbReference>
<dbReference type="GO" id="GO:0070006">
    <property type="term" value="F:metalloaminopeptidase activity"/>
    <property type="evidence" value="ECO:0007669"/>
    <property type="project" value="InterPro"/>
</dbReference>
<dbReference type="GO" id="GO:0006508">
    <property type="term" value="P:proteolysis"/>
    <property type="evidence" value="ECO:0007669"/>
    <property type="project" value="UniProtKB-KW"/>
</dbReference>
<dbReference type="CDD" id="cd00433">
    <property type="entry name" value="Peptidase_M17"/>
    <property type="match status" value="1"/>
</dbReference>
<dbReference type="FunFam" id="3.40.220.10:FF:000001">
    <property type="entry name" value="Probable cytosol aminopeptidase"/>
    <property type="match status" value="1"/>
</dbReference>
<dbReference type="FunFam" id="3.40.630.10:FF:000004">
    <property type="entry name" value="Probable cytosol aminopeptidase"/>
    <property type="match status" value="1"/>
</dbReference>
<dbReference type="Gene3D" id="3.40.220.10">
    <property type="entry name" value="Leucine Aminopeptidase, subunit E, domain 1"/>
    <property type="match status" value="1"/>
</dbReference>
<dbReference type="Gene3D" id="3.40.630.10">
    <property type="entry name" value="Zn peptidases"/>
    <property type="match status" value="1"/>
</dbReference>
<dbReference type="HAMAP" id="MF_00181">
    <property type="entry name" value="Cytosol_peptidase_M17"/>
    <property type="match status" value="1"/>
</dbReference>
<dbReference type="InterPro" id="IPR011356">
    <property type="entry name" value="Leucine_aapep/pepB"/>
</dbReference>
<dbReference type="InterPro" id="IPR043472">
    <property type="entry name" value="Macro_dom-like"/>
</dbReference>
<dbReference type="InterPro" id="IPR000819">
    <property type="entry name" value="Peptidase_M17_C"/>
</dbReference>
<dbReference type="InterPro" id="IPR023042">
    <property type="entry name" value="Peptidase_M17_leu_NH2_pept"/>
</dbReference>
<dbReference type="InterPro" id="IPR008283">
    <property type="entry name" value="Peptidase_M17_N"/>
</dbReference>
<dbReference type="NCBIfam" id="NF002072">
    <property type="entry name" value="PRK00913.1-1"/>
    <property type="match status" value="1"/>
</dbReference>
<dbReference type="NCBIfam" id="NF002073">
    <property type="entry name" value="PRK00913.1-2"/>
    <property type="match status" value="1"/>
</dbReference>
<dbReference type="NCBIfam" id="NF002074">
    <property type="entry name" value="PRK00913.1-4"/>
    <property type="match status" value="1"/>
</dbReference>
<dbReference type="PANTHER" id="PTHR11963:SF23">
    <property type="entry name" value="CYTOSOL AMINOPEPTIDASE"/>
    <property type="match status" value="1"/>
</dbReference>
<dbReference type="PANTHER" id="PTHR11963">
    <property type="entry name" value="LEUCINE AMINOPEPTIDASE-RELATED"/>
    <property type="match status" value="1"/>
</dbReference>
<dbReference type="Pfam" id="PF00883">
    <property type="entry name" value="Peptidase_M17"/>
    <property type="match status" value="1"/>
</dbReference>
<dbReference type="Pfam" id="PF02789">
    <property type="entry name" value="Peptidase_M17_N"/>
    <property type="match status" value="1"/>
</dbReference>
<dbReference type="PRINTS" id="PR00481">
    <property type="entry name" value="LAMNOPPTDASE"/>
</dbReference>
<dbReference type="SUPFAM" id="SSF52949">
    <property type="entry name" value="Macro domain-like"/>
    <property type="match status" value="1"/>
</dbReference>
<dbReference type="SUPFAM" id="SSF53187">
    <property type="entry name" value="Zn-dependent exopeptidases"/>
    <property type="match status" value="1"/>
</dbReference>
<dbReference type="PROSITE" id="PS00631">
    <property type="entry name" value="CYTOSOL_AP"/>
    <property type="match status" value="1"/>
</dbReference>
<protein>
    <recommendedName>
        <fullName evidence="1">Probable cytosol aminopeptidase</fullName>
        <ecNumber evidence="1">3.4.11.1</ecNumber>
    </recommendedName>
    <alternativeName>
        <fullName evidence="1">Leucine aminopeptidase</fullName>
        <shortName evidence="1">LAP</shortName>
        <ecNumber evidence="1">3.4.11.10</ecNumber>
    </alternativeName>
    <alternativeName>
        <fullName evidence="1">Leucyl aminopeptidase</fullName>
    </alternativeName>
</protein>
<evidence type="ECO:0000255" key="1">
    <source>
        <dbReference type="HAMAP-Rule" id="MF_00181"/>
    </source>
</evidence>
<gene>
    <name evidence="1" type="primary">pepA</name>
    <name type="ordered locus">SeD_A4863</name>
</gene>